<dbReference type="EC" id="2.7.7.6" evidence="1"/>
<dbReference type="EMBL" id="CP000879">
    <property type="protein sequence ID" value="ABX30850.1"/>
    <property type="molecule type" value="Genomic_DNA"/>
</dbReference>
<dbReference type="RefSeq" id="WP_012207957.1">
    <property type="nucleotide sequence ID" value="NC_010003.1"/>
</dbReference>
<dbReference type="SMR" id="A9BEX2"/>
<dbReference type="STRING" id="403833.Pmob_0101"/>
<dbReference type="KEGG" id="pmo:Pmob_0101"/>
<dbReference type="eggNOG" id="COG1758">
    <property type="taxonomic scope" value="Bacteria"/>
</dbReference>
<dbReference type="HOGENOM" id="CLU_125406_4_0_0"/>
<dbReference type="OrthoDB" id="48414at2"/>
<dbReference type="Proteomes" id="UP000000789">
    <property type="component" value="Chromosome"/>
</dbReference>
<dbReference type="GO" id="GO:0000428">
    <property type="term" value="C:DNA-directed RNA polymerase complex"/>
    <property type="evidence" value="ECO:0007669"/>
    <property type="project" value="UniProtKB-KW"/>
</dbReference>
<dbReference type="GO" id="GO:0003677">
    <property type="term" value="F:DNA binding"/>
    <property type="evidence" value="ECO:0007669"/>
    <property type="project" value="UniProtKB-UniRule"/>
</dbReference>
<dbReference type="GO" id="GO:0003899">
    <property type="term" value="F:DNA-directed RNA polymerase activity"/>
    <property type="evidence" value="ECO:0007669"/>
    <property type="project" value="UniProtKB-UniRule"/>
</dbReference>
<dbReference type="GO" id="GO:0006351">
    <property type="term" value="P:DNA-templated transcription"/>
    <property type="evidence" value="ECO:0007669"/>
    <property type="project" value="UniProtKB-UniRule"/>
</dbReference>
<dbReference type="Gene3D" id="3.90.940.10">
    <property type="match status" value="1"/>
</dbReference>
<dbReference type="HAMAP" id="MF_00366">
    <property type="entry name" value="RNApol_bact_RpoZ"/>
    <property type="match status" value="1"/>
</dbReference>
<dbReference type="InterPro" id="IPR003716">
    <property type="entry name" value="DNA-dir_RNA_pol_omega"/>
</dbReference>
<dbReference type="InterPro" id="IPR006110">
    <property type="entry name" value="Pol_omega/Rpo6/RPB6"/>
</dbReference>
<dbReference type="InterPro" id="IPR036161">
    <property type="entry name" value="RPB6/omega-like_sf"/>
</dbReference>
<dbReference type="Pfam" id="PF01192">
    <property type="entry name" value="RNA_pol_Rpb6"/>
    <property type="match status" value="1"/>
</dbReference>
<dbReference type="SMART" id="SM01409">
    <property type="entry name" value="RNA_pol_Rpb6"/>
    <property type="match status" value="1"/>
</dbReference>
<dbReference type="SUPFAM" id="SSF63562">
    <property type="entry name" value="RPB6/omega subunit-like"/>
    <property type="match status" value="1"/>
</dbReference>
<organism>
    <name type="scientific">Petrotoga mobilis (strain DSM 10674 / SJ95)</name>
    <dbReference type="NCBI Taxonomy" id="403833"/>
    <lineage>
        <taxon>Bacteria</taxon>
        <taxon>Thermotogati</taxon>
        <taxon>Thermotogota</taxon>
        <taxon>Thermotogae</taxon>
        <taxon>Petrotogales</taxon>
        <taxon>Petrotogaceae</taxon>
        <taxon>Petrotoga</taxon>
    </lineage>
</organism>
<protein>
    <recommendedName>
        <fullName evidence="1">DNA-directed RNA polymerase subunit omega</fullName>
        <shortName evidence="1">RNAP omega subunit</shortName>
        <ecNumber evidence="1">2.7.7.6</ecNumber>
    </recommendedName>
    <alternativeName>
        <fullName evidence="1">RNA polymerase omega subunit</fullName>
    </alternativeName>
    <alternativeName>
        <fullName evidence="1">Transcriptase subunit omega</fullName>
    </alternativeName>
</protein>
<reference key="1">
    <citation type="submission" date="2007-11" db="EMBL/GenBank/DDBJ databases">
        <title>Complete sequence of Petroga mobilis SJ95.</title>
        <authorList>
            <consortium name="US DOE Joint Genome Institute"/>
            <person name="Copeland A."/>
            <person name="Lucas S."/>
            <person name="Lapidus A."/>
            <person name="Barry K."/>
            <person name="Glavina del Rio T."/>
            <person name="Dalin E."/>
            <person name="Tice H."/>
            <person name="Pitluck S."/>
            <person name="Meincke L."/>
            <person name="Brettin T."/>
            <person name="Bruce D."/>
            <person name="Detter J.C."/>
            <person name="Han C."/>
            <person name="Kuske C.R."/>
            <person name="Schmutz J."/>
            <person name="Larimer F."/>
            <person name="Land M."/>
            <person name="Hauser L."/>
            <person name="Kyrpides N."/>
            <person name="Mikhailova N."/>
            <person name="Noll K."/>
            <person name="Richardson P."/>
        </authorList>
    </citation>
    <scope>NUCLEOTIDE SEQUENCE [LARGE SCALE GENOMIC DNA]</scope>
    <source>
        <strain>DSM 10674 / SJ95</strain>
    </source>
</reference>
<comment type="function">
    <text evidence="1">Promotes RNA polymerase assembly. Latches the N- and C-terminal regions of the beta' subunit thereby facilitating its interaction with the beta and alpha subunits.</text>
</comment>
<comment type="catalytic activity">
    <reaction evidence="1">
        <text>RNA(n) + a ribonucleoside 5'-triphosphate = RNA(n+1) + diphosphate</text>
        <dbReference type="Rhea" id="RHEA:21248"/>
        <dbReference type="Rhea" id="RHEA-COMP:14527"/>
        <dbReference type="Rhea" id="RHEA-COMP:17342"/>
        <dbReference type="ChEBI" id="CHEBI:33019"/>
        <dbReference type="ChEBI" id="CHEBI:61557"/>
        <dbReference type="ChEBI" id="CHEBI:140395"/>
        <dbReference type="EC" id="2.7.7.6"/>
    </reaction>
</comment>
<comment type="subunit">
    <text evidence="1">The RNAP catalytic core consists of 2 alpha, 1 beta, 1 beta' and 1 omega subunit. When a sigma factor is associated with the core the holoenzyme is formed, which can initiate transcription.</text>
</comment>
<comment type="similarity">
    <text evidence="1">Belongs to the RNA polymerase subunit omega family.</text>
</comment>
<sequence>MNLGINYDRILNKAKYKYVIPIIAAKRAETLKNLDELKGITEKKDYVSIALKELENGKIQVKNSALLDSLSK</sequence>
<feature type="chain" id="PRO_1000205525" description="DNA-directed RNA polymerase subunit omega">
    <location>
        <begin position="1"/>
        <end position="72"/>
    </location>
</feature>
<gene>
    <name evidence="1" type="primary">rpoZ</name>
    <name type="ordered locus">Pmob_0101</name>
</gene>
<evidence type="ECO:0000255" key="1">
    <source>
        <dbReference type="HAMAP-Rule" id="MF_00366"/>
    </source>
</evidence>
<proteinExistence type="inferred from homology"/>
<keyword id="KW-0240">DNA-directed RNA polymerase</keyword>
<keyword id="KW-0548">Nucleotidyltransferase</keyword>
<keyword id="KW-0804">Transcription</keyword>
<keyword id="KW-0808">Transferase</keyword>
<accession>A9BEX2</accession>
<name>RPOZ_PETMO</name>